<dbReference type="EMBL" id="AB085732">
    <property type="protein sequence ID" value="BAC16626.1"/>
    <property type="molecule type" value="Genomic_DNA"/>
</dbReference>
<dbReference type="SMR" id="Q8HQF2"/>
<dbReference type="GO" id="GO:0005743">
    <property type="term" value="C:mitochondrial inner membrane"/>
    <property type="evidence" value="ECO:0007669"/>
    <property type="project" value="UniProtKB-SubCell"/>
</dbReference>
<dbReference type="GO" id="GO:0045275">
    <property type="term" value="C:respiratory chain complex III"/>
    <property type="evidence" value="ECO:0007669"/>
    <property type="project" value="InterPro"/>
</dbReference>
<dbReference type="GO" id="GO:0046872">
    <property type="term" value="F:metal ion binding"/>
    <property type="evidence" value="ECO:0007669"/>
    <property type="project" value="UniProtKB-KW"/>
</dbReference>
<dbReference type="GO" id="GO:0008121">
    <property type="term" value="F:ubiquinol-cytochrome-c reductase activity"/>
    <property type="evidence" value="ECO:0007669"/>
    <property type="project" value="InterPro"/>
</dbReference>
<dbReference type="GO" id="GO:0006122">
    <property type="term" value="P:mitochondrial electron transport, ubiquinol to cytochrome c"/>
    <property type="evidence" value="ECO:0007669"/>
    <property type="project" value="TreeGrafter"/>
</dbReference>
<dbReference type="CDD" id="cd00290">
    <property type="entry name" value="cytochrome_b_C"/>
    <property type="match status" value="1"/>
</dbReference>
<dbReference type="CDD" id="cd00284">
    <property type="entry name" value="Cytochrome_b_N"/>
    <property type="match status" value="1"/>
</dbReference>
<dbReference type="FunFam" id="1.20.810.10:FF:000002">
    <property type="entry name" value="Cytochrome b"/>
    <property type="match status" value="1"/>
</dbReference>
<dbReference type="Gene3D" id="1.20.810.10">
    <property type="entry name" value="Cytochrome Bc1 Complex, Chain C"/>
    <property type="match status" value="1"/>
</dbReference>
<dbReference type="InterPro" id="IPR005798">
    <property type="entry name" value="Cyt_b/b6_C"/>
</dbReference>
<dbReference type="InterPro" id="IPR036150">
    <property type="entry name" value="Cyt_b/b6_C_sf"/>
</dbReference>
<dbReference type="InterPro" id="IPR005797">
    <property type="entry name" value="Cyt_b/b6_N"/>
</dbReference>
<dbReference type="InterPro" id="IPR027387">
    <property type="entry name" value="Cytb/b6-like_sf"/>
</dbReference>
<dbReference type="InterPro" id="IPR030689">
    <property type="entry name" value="Cytochrome_b"/>
</dbReference>
<dbReference type="InterPro" id="IPR048260">
    <property type="entry name" value="Cytochrome_b_C_euk/bac"/>
</dbReference>
<dbReference type="InterPro" id="IPR048259">
    <property type="entry name" value="Cytochrome_b_N_euk/bac"/>
</dbReference>
<dbReference type="InterPro" id="IPR016174">
    <property type="entry name" value="Di-haem_cyt_TM"/>
</dbReference>
<dbReference type="PANTHER" id="PTHR19271">
    <property type="entry name" value="CYTOCHROME B"/>
    <property type="match status" value="1"/>
</dbReference>
<dbReference type="PANTHER" id="PTHR19271:SF16">
    <property type="entry name" value="CYTOCHROME B"/>
    <property type="match status" value="1"/>
</dbReference>
<dbReference type="Pfam" id="PF00032">
    <property type="entry name" value="Cytochrom_B_C"/>
    <property type="match status" value="1"/>
</dbReference>
<dbReference type="Pfam" id="PF00033">
    <property type="entry name" value="Cytochrome_B"/>
    <property type="match status" value="1"/>
</dbReference>
<dbReference type="PIRSF" id="PIRSF038885">
    <property type="entry name" value="COB"/>
    <property type="match status" value="1"/>
</dbReference>
<dbReference type="SUPFAM" id="SSF81648">
    <property type="entry name" value="a domain/subunit of cytochrome bc1 complex (Ubiquinol-cytochrome c reductase)"/>
    <property type="match status" value="1"/>
</dbReference>
<dbReference type="SUPFAM" id="SSF81342">
    <property type="entry name" value="Transmembrane di-heme cytochromes"/>
    <property type="match status" value="1"/>
</dbReference>
<dbReference type="PROSITE" id="PS51003">
    <property type="entry name" value="CYTB_CTER"/>
    <property type="match status" value="1"/>
</dbReference>
<dbReference type="PROSITE" id="PS51002">
    <property type="entry name" value="CYTB_NTER"/>
    <property type="match status" value="1"/>
</dbReference>
<comment type="function">
    <text evidence="2">Component of the ubiquinol-cytochrome c reductase complex (complex III or cytochrome b-c1 complex) that is part of the mitochondrial respiratory chain. The b-c1 complex mediates electron transfer from ubiquinol to cytochrome c. Contributes to the generation of a proton gradient across the mitochondrial membrane that is then used for ATP synthesis.</text>
</comment>
<comment type="cofactor">
    <cofactor evidence="2">
        <name>heme b</name>
        <dbReference type="ChEBI" id="CHEBI:60344"/>
    </cofactor>
    <text evidence="2">Binds 2 heme b groups non-covalently.</text>
</comment>
<comment type="subunit">
    <text evidence="2">The cytochrome bc1 complex contains 11 subunits: 3 respiratory subunits (MT-CYB, CYC1 and UQCRFS1), 2 core proteins (UQCRC1 and UQCRC2) and 6 low-molecular weight proteins (UQCRH/QCR6, UQCRB/QCR7, UQCRQ/QCR8, UQCR10/QCR9, UQCR11/QCR10 and a cleavage product of UQCRFS1). This cytochrome bc1 complex then forms a dimer.</text>
</comment>
<comment type="subcellular location">
    <subcellularLocation>
        <location evidence="2">Mitochondrion inner membrane</location>
        <topology evidence="2">Multi-pass membrane protein</topology>
    </subcellularLocation>
</comment>
<comment type="miscellaneous">
    <text evidence="1">Heme 1 (or BL or b562) is low-potential and absorbs at about 562 nm, and heme 2 (or BH or b566) is high-potential and absorbs at about 566 nm.</text>
</comment>
<comment type="similarity">
    <text evidence="3 4">Belongs to the cytochrome b family.</text>
</comment>
<comment type="caution">
    <text evidence="2">The full-length protein contains only eight transmembrane helices, not nine as predicted by bioinformatics tools.</text>
</comment>
<feature type="chain" id="PRO_0000254752" description="Cytochrome b">
    <location>
        <begin position="1"/>
        <end position="379"/>
    </location>
</feature>
<feature type="transmembrane region" description="Helical" evidence="2">
    <location>
        <begin position="33"/>
        <end position="53"/>
    </location>
</feature>
<feature type="transmembrane region" description="Helical" evidence="2">
    <location>
        <begin position="77"/>
        <end position="98"/>
    </location>
</feature>
<feature type="transmembrane region" description="Helical" evidence="2">
    <location>
        <begin position="113"/>
        <end position="133"/>
    </location>
</feature>
<feature type="transmembrane region" description="Helical" evidence="2">
    <location>
        <begin position="178"/>
        <end position="198"/>
    </location>
</feature>
<feature type="transmembrane region" description="Helical" evidence="2">
    <location>
        <begin position="226"/>
        <end position="246"/>
    </location>
</feature>
<feature type="transmembrane region" description="Helical" evidence="2">
    <location>
        <begin position="288"/>
        <end position="308"/>
    </location>
</feature>
<feature type="transmembrane region" description="Helical" evidence="2">
    <location>
        <begin position="320"/>
        <end position="340"/>
    </location>
</feature>
<feature type="transmembrane region" description="Helical" evidence="2">
    <location>
        <begin position="347"/>
        <end position="367"/>
    </location>
</feature>
<feature type="binding site" description="axial binding residue" evidence="2">
    <location>
        <position position="83"/>
    </location>
    <ligand>
        <name>heme b</name>
        <dbReference type="ChEBI" id="CHEBI:60344"/>
        <label>b562</label>
    </ligand>
    <ligandPart>
        <name>Fe</name>
        <dbReference type="ChEBI" id="CHEBI:18248"/>
    </ligandPart>
</feature>
<feature type="binding site" description="axial binding residue" evidence="2">
    <location>
        <position position="97"/>
    </location>
    <ligand>
        <name>heme b</name>
        <dbReference type="ChEBI" id="CHEBI:60344"/>
        <label>b566</label>
    </ligand>
    <ligandPart>
        <name>Fe</name>
        <dbReference type="ChEBI" id="CHEBI:18248"/>
    </ligandPart>
</feature>
<feature type="binding site" description="axial binding residue" evidence="2">
    <location>
        <position position="182"/>
    </location>
    <ligand>
        <name>heme b</name>
        <dbReference type="ChEBI" id="CHEBI:60344"/>
        <label>b562</label>
    </ligand>
    <ligandPart>
        <name>Fe</name>
        <dbReference type="ChEBI" id="CHEBI:18248"/>
    </ligandPart>
</feature>
<feature type="binding site" description="axial binding residue" evidence="2">
    <location>
        <position position="196"/>
    </location>
    <ligand>
        <name>heme b</name>
        <dbReference type="ChEBI" id="CHEBI:60344"/>
        <label>b566</label>
    </ligand>
    <ligandPart>
        <name>Fe</name>
        <dbReference type="ChEBI" id="CHEBI:18248"/>
    </ligandPart>
</feature>
<feature type="binding site" evidence="2">
    <location>
        <position position="201"/>
    </location>
    <ligand>
        <name>a ubiquinone</name>
        <dbReference type="ChEBI" id="CHEBI:16389"/>
    </ligand>
</feature>
<geneLocation type="mitochondrion"/>
<proteinExistence type="inferred from homology"/>
<protein>
    <recommendedName>
        <fullName>Cytochrome b</fullName>
    </recommendedName>
    <alternativeName>
        <fullName>Complex III subunit 3</fullName>
    </alternativeName>
    <alternativeName>
        <fullName>Complex III subunit III</fullName>
    </alternativeName>
    <alternativeName>
        <fullName>Cytochrome b-c1 complex subunit 3</fullName>
    </alternativeName>
    <alternativeName>
        <fullName>Ubiquinol-cytochrome-c reductase complex cytochrome b subunit</fullName>
    </alternativeName>
</protein>
<gene>
    <name type="primary">MT-CYB</name>
    <name type="synonym">COB</name>
    <name type="synonym">CYTB</name>
    <name type="synonym">MTCYB</name>
</gene>
<keyword id="KW-0249">Electron transport</keyword>
<keyword id="KW-0349">Heme</keyword>
<keyword id="KW-0408">Iron</keyword>
<keyword id="KW-0472">Membrane</keyword>
<keyword id="KW-0479">Metal-binding</keyword>
<keyword id="KW-0496">Mitochondrion</keyword>
<keyword id="KW-0999">Mitochondrion inner membrane</keyword>
<keyword id="KW-0679">Respiratory chain</keyword>
<keyword id="KW-0812">Transmembrane</keyword>
<keyword id="KW-1133">Transmembrane helix</keyword>
<keyword id="KW-0813">Transport</keyword>
<keyword id="KW-0830">Ubiquinone</keyword>
<name>CYB_PTERF</name>
<sequence>MTNIRKSHPLFKIINDSLIDLPAPSNISSWWNFGSLLGICLAIQILTGLFLAMHYTSDTTTAFQSVTHICRDVNYGWILRYLHANGASMFFICLFLHMGRGLYYGSYMYKETWNVGVILLFAVMATAFMGYVLPWGQMSFWGATVITNLLSAIPYIGTNLVEWIWGGFSVDKATLTRFFAFHFLLPFIIFALVLVHLLFLHETGSNNPTGVPSDSDMIPFHPYYTIKDMLGALVMILALLMLVLFSPDLLGDPDNYIPANPLNTPPHIKPEWYFLFAYAILRSIPNKLGGVLALVLSILILILMPLLHTSKQRSMMFRPLSQCMFWLLVADLLTLTWIGGQPVEHPFIIIGQLASILYFLLILVLMPITSIVENHLLKW</sequence>
<accession>Q8HQF2</accession>
<evidence type="ECO:0000250" key="1"/>
<evidence type="ECO:0000250" key="2">
    <source>
        <dbReference type="UniProtKB" id="P00157"/>
    </source>
</evidence>
<evidence type="ECO:0000255" key="3">
    <source>
        <dbReference type="PROSITE-ProRule" id="PRU00967"/>
    </source>
</evidence>
<evidence type="ECO:0000255" key="4">
    <source>
        <dbReference type="PROSITE-ProRule" id="PRU00968"/>
    </source>
</evidence>
<reference key="1">
    <citation type="journal article" date="2003" name="Genes Genet. Syst.">
        <title>Molecular phylogeny of Japanese Rhinolophidae based on variations in the complete sequence of the mitochondrial cytochrome b gene.</title>
        <authorList>
            <person name="Sakai T."/>
            <person name="Kikkawa Y."/>
            <person name="Tuchiya K."/>
            <person name="Harada M."/>
            <person name="Kanoe M."/>
            <person name="Yoshiyuki M."/>
            <person name="Yonekawa H."/>
        </authorList>
    </citation>
    <scope>NUCLEOTIDE SEQUENCE [GENOMIC DNA]</scope>
</reference>
<organism>
    <name type="scientific">Pteropus rufus</name>
    <name type="common">Madagascan flying fox</name>
    <dbReference type="NCBI Taxonomy" id="196297"/>
    <lineage>
        <taxon>Eukaryota</taxon>
        <taxon>Metazoa</taxon>
        <taxon>Chordata</taxon>
        <taxon>Craniata</taxon>
        <taxon>Vertebrata</taxon>
        <taxon>Euteleostomi</taxon>
        <taxon>Mammalia</taxon>
        <taxon>Eutheria</taxon>
        <taxon>Laurasiatheria</taxon>
        <taxon>Chiroptera</taxon>
        <taxon>Yinpterochiroptera</taxon>
        <taxon>Pteropodoidea</taxon>
        <taxon>Pteropodidae</taxon>
        <taxon>Pteropodinae</taxon>
        <taxon>Pteropus</taxon>
    </lineage>
</organism>